<name>PYR1_MASLA</name>
<reference key="1">
    <citation type="submission" date="1992-01" db="EMBL/GenBank/DDBJ databases">
        <title>Structure and molecular evolution of the gene cluster encoding proteins of the rod substructure of the phycobilisome from the cyanobacterium Mastigocadus laminosus.</title>
        <authorList>
            <person name="Kufer W."/>
            <person name="Hoegner A."/>
            <person name="Eberlein M."/>
            <person name="Mayer K."/>
            <person name="Buchner A."/>
            <person name="Gottschalk L."/>
        </authorList>
    </citation>
    <scope>NUCLEOTIDE SEQUENCE [GENOMIC DNA]</scope>
</reference>
<reference key="2">
    <citation type="journal article" date="1985" name="Biol. Chem. Hoppe-Seyler">
        <title>Linker polypeptides of the phycobilisome from the cyanobacterium Mastigocladus laminosus: amino-acid sequences and relationships.</title>
        <authorList>
            <person name="Fueglistaller P."/>
            <person name="Suter F."/>
            <person name="Zuber H."/>
        </authorList>
    </citation>
    <scope>PROTEIN SEQUENCE OF 2-45</scope>
</reference>
<comment type="function">
    <text>Rod linker protein, associated with phycocyanin. Linker polypeptides determine the state of aggregation and the location of the disk-shaped phycobiliprotein units within the phycobilisome and modulate their spectroscopic properties in order to mediate a directed and optimal energy transfer.</text>
</comment>
<comment type="subcellular location">
    <subcellularLocation>
        <location>Cellular thylakoid membrane</location>
        <topology>Peripheral membrane protein</topology>
        <orientation>Cytoplasmic side</orientation>
    </subcellularLocation>
    <text>This protein occurs in the rod, it is associated with phycocyanin.</text>
</comment>
<comment type="similarity">
    <text evidence="2">Belongs to the phycobilisome linker protein family.</text>
</comment>
<protein>
    <recommendedName>
        <fullName>Phycobilisome 32.1 kDa linker polypeptide, phycocyanin-associated, rod</fullName>
    </recommendedName>
</protein>
<accession>P11398</accession>
<feature type="initiator methionine" description="Removed" evidence="3">
    <location>
        <position position="1"/>
    </location>
</feature>
<feature type="chain" id="PRO_0000199220" description="Phycobilisome 32.1 kDa linker polypeptide, phycocyanin-associated, rod">
    <location>
        <begin position="2"/>
        <end position="286"/>
    </location>
</feature>
<feature type="domain" description="PBS-linker" evidence="2">
    <location>
        <begin position="2"/>
        <end position="180"/>
    </location>
</feature>
<feature type="domain" description="CpcD-like" evidence="1">
    <location>
        <begin position="234"/>
        <end position="286"/>
    </location>
</feature>
<feature type="sequence conflict" description="In Ref. 2; AA sequence." evidence="4" ref="2">
    <original>H</original>
    <variation>E</variation>
    <location>
        <position position="42"/>
    </location>
</feature>
<sequence>MAITAAASRLGTEPFSNAAKIELRSDASREEVEAVINAVYRHVLGNDYIMASERLVSAESLLRDGNLTVREFVRSVAKSELYKKKFFYNSFQTRFIELNYKHLLGRAPYDESEIVFHLDLYQNKGYDAEIDSYIDSVEYQNNFGDNIVPYYRGFETQPGQKTVGFNRMFRLYRGYANSDRAQIEGTKPRLARELATNKASSIVGPSGSNPAWGYRPSVDITPRKTLGNAVGENDRVYRIEVTGVRSPGYPSVRRSSYAIIVPYERLSEKIQQIHKLGGKIVSITSA</sequence>
<evidence type="ECO:0000255" key="1">
    <source>
        <dbReference type="PROSITE-ProRule" id="PRU00771"/>
    </source>
</evidence>
<evidence type="ECO:0000255" key="2">
    <source>
        <dbReference type="PROSITE-ProRule" id="PRU00775"/>
    </source>
</evidence>
<evidence type="ECO:0000269" key="3">
    <source>
    </source>
</evidence>
<evidence type="ECO:0000305" key="4"/>
<dbReference type="EMBL" id="M75599">
    <property type="protein sequence ID" value="AAC64651.1"/>
    <property type="molecule type" value="Genomic_DNA"/>
</dbReference>
<dbReference type="PIR" id="C24691">
    <property type="entry name" value="C24691"/>
</dbReference>
<dbReference type="SMR" id="P11398"/>
<dbReference type="GO" id="GO:0030089">
    <property type="term" value="C:phycobilisome"/>
    <property type="evidence" value="ECO:0007669"/>
    <property type="project" value="UniProtKB-KW"/>
</dbReference>
<dbReference type="GO" id="GO:0031676">
    <property type="term" value="C:plasma membrane-derived thylakoid membrane"/>
    <property type="evidence" value="ECO:0007669"/>
    <property type="project" value="UniProtKB-SubCell"/>
</dbReference>
<dbReference type="GO" id="GO:0015979">
    <property type="term" value="P:photosynthesis"/>
    <property type="evidence" value="ECO:0007669"/>
    <property type="project" value="UniProtKB-KW"/>
</dbReference>
<dbReference type="Gene3D" id="1.10.3130.20">
    <property type="entry name" value="Phycobilisome linker domain"/>
    <property type="match status" value="1"/>
</dbReference>
<dbReference type="InterPro" id="IPR008213">
    <property type="entry name" value="CpcD-like_dom"/>
</dbReference>
<dbReference type="InterPro" id="IPR001297">
    <property type="entry name" value="PBS_linker_dom"/>
</dbReference>
<dbReference type="InterPro" id="IPR038255">
    <property type="entry name" value="PBS_linker_sf"/>
</dbReference>
<dbReference type="InterPro" id="IPR016470">
    <property type="entry name" value="Phycobilisome"/>
</dbReference>
<dbReference type="PANTHER" id="PTHR34011:SF6">
    <property type="entry name" value="PHYCOBILIPROTEIN APCE"/>
    <property type="match status" value="1"/>
</dbReference>
<dbReference type="PANTHER" id="PTHR34011">
    <property type="entry name" value="PHYCOBILISOME 32.1 KDA LINKER POLYPEPTIDE, PHYCOCYANIN-ASSOCIATED, ROD 2-RELATED"/>
    <property type="match status" value="1"/>
</dbReference>
<dbReference type="Pfam" id="PF01383">
    <property type="entry name" value="CpcD"/>
    <property type="match status" value="1"/>
</dbReference>
<dbReference type="Pfam" id="PF00427">
    <property type="entry name" value="PBS_linker_poly"/>
    <property type="match status" value="1"/>
</dbReference>
<dbReference type="PIRSF" id="PIRSF005898">
    <property type="entry name" value="Phycobilisome_CpeC/CpcI"/>
    <property type="match status" value="1"/>
</dbReference>
<dbReference type="SMART" id="SM01094">
    <property type="entry name" value="CpcD"/>
    <property type="match status" value="1"/>
</dbReference>
<dbReference type="PROSITE" id="PS51441">
    <property type="entry name" value="CPCD_LIKE"/>
    <property type="match status" value="1"/>
</dbReference>
<dbReference type="PROSITE" id="PS51445">
    <property type="entry name" value="PBS_LINKER"/>
    <property type="match status" value="1"/>
</dbReference>
<gene>
    <name type="primary">cpcC</name>
</gene>
<keyword id="KW-0042">Antenna complex</keyword>
<keyword id="KW-0903">Direct protein sequencing</keyword>
<keyword id="KW-0472">Membrane</keyword>
<keyword id="KW-0602">Photosynthesis</keyword>
<keyword id="KW-0605">Phycobilisome</keyword>
<keyword id="KW-0793">Thylakoid</keyword>
<organism>
    <name type="scientific">Mastigocladus laminosus</name>
    <name type="common">Fischerella sp.</name>
    <dbReference type="NCBI Taxonomy" id="83541"/>
    <lineage>
        <taxon>Bacteria</taxon>
        <taxon>Bacillati</taxon>
        <taxon>Cyanobacteriota</taxon>
        <taxon>Cyanophyceae</taxon>
        <taxon>Nostocales</taxon>
        <taxon>Hapalosiphonaceae</taxon>
        <taxon>Mastigocladus</taxon>
    </lineage>
</organism>
<proteinExistence type="evidence at protein level"/>